<accession>Q91637</accession>
<evidence type="ECO:0000250" key="1"/>
<evidence type="ECO:0000255" key="2"/>
<evidence type="ECO:0000255" key="3">
    <source>
        <dbReference type="PROSITE-ProRule" id="PRU00283"/>
    </source>
</evidence>
<evidence type="ECO:0000256" key="4">
    <source>
        <dbReference type="SAM" id="MobiDB-lite"/>
    </source>
</evidence>
<evidence type="ECO:0000269" key="5">
    <source>
    </source>
</evidence>
<evidence type="ECO:0000305" key="6"/>
<organism>
    <name type="scientific">Xenopus laevis</name>
    <name type="common">African clawed frog</name>
    <dbReference type="NCBI Taxonomy" id="8355"/>
    <lineage>
        <taxon>Eukaryota</taxon>
        <taxon>Metazoa</taxon>
        <taxon>Chordata</taxon>
        <taxon>Craniata</taxon>
        <taxon>Vertebrata</taxon>
        <taxon>Euteleostomi</taxon>
        <taxon>Amphibia</taxon>
        <taxon>Batrachia</taxon>
        <taxon>Anura</taxon>
        <taxon>Pipoidea</taxon>
        <taxon>Pipidae</taxon>
        <taxon>Xenopodinae</taxon>
        <taxon>Xenopus</taxon>
        <taxon>Xenopus</taxon>
    </lineage>
</organism>
<comment type="function">
    <text evidence="1 5">Plus end-directed microtubule-dependent motor. May regulate microtubule dynamics during axonal growth (By similarity). Required for normal progression through mitosis. Required for normal congress of chromosomes at the metaphase plate. Required for normal spindle dynamics during mitosis. Promotes spindle turnover. Implicated in formation of bipolar mitotic spindles Has microtubule depolymerization activity.</text>
</comment>
<comment type="subunit">
    <text evidence="5">Interacts with aurka and plk1.</text>
</comment>
<comment type="subcellular location">
    <subcellularLocation>
        <location evidence="1">Cytoplasm</location>
    </subcellularLocation>
    <subcellularLocation>
        <location evidence="5">Cytoplasm</location>
        <location evidence="5">Cytoskeleton</location>
        <location evidence="5">Microtubule organizing center</location>
        <location evidence="5">Centrosome</location>
    </subcellularLocation>
    <subcellularLocation>
        <location evidence="5">Cytoplasm</location>
        <location evidence="5">Cytoskeleton</location>
        <location evidence="5">Spindle pole</location>
    </subcellularLocation>
    <subcellularLocation>
        <location evidence="5">Cytoplasm</location>
        <location evidence="5">Cytoskeleton</location>
        <location evidence="5">Spindle</location>
    </subcellularLocation>
    <text>Localized to the spindle microtubules and spindle poles from prophase to metaphase. Efficient targeting to spindle microtubules and spindle poles requires the kinase activity of plk1.</text>
</comment>
<comment type="PTM">
    <text evidence="5">Phosphorylation by plk1 promotes location at spindle microtubules and spindle poles, and enhances its microtubule depolymerization activity.</text>
</comment>
<comment type="PTM">
    <text evidence="5">Phosphorylation by AURKA interferes with location at spindle microtubules and spindle poles, and inhibits its microtubule depolymerization activity.</text>
</comment>
<comment type="similarity">
    <text evidence="3">Belongs to the TRAFAC class myosin-kinesin ATPase superfamily. Kinesin family. MCAK/KIF2 subfamily.</text>
</comment>
<comment type="sequence caution" evidence="6">
    <conflict type="erroneous initiation">
        <sequence resource="EMBL-CDS" id="AAC59744"/>
    </conflict>
    <text>Extended N-terminus.</text>
</comment>
<reference key="1">
    <citation type="submission" date="2000-02" db="EMBL/GenBank/DDBJ databases">
        <authorList>
            <person name="Walczak C.E."/>
        </authorList>
    </citation>
    <scope>NUCLEOTIDE SEQUENCE [MRNA]</scope>
    <scope>SEQUENCE REVISION</scope>
    <source>
        <tissue>Ovary</tissue>
    </source>
</reference>
<reference key="2">
    <citation type="journal article" date="1996" name="Cell">
        <title>XKCM1: a Xenopus kinesin-related protein that regulates microtubule dynamics during mitotic spindle assembly.</title>
        <authorList>
            <person name="Walczak C.E."/>
            <person name="Mitchison T.J."/>
            <person name="Desai A."/>
        </authorList>
    </citation>
    <scope>NUCLEOTIDE SEQUENCE [MRNA] OF 124-682</scope>
    <source>
        <tissue>Ovary</tissue>
    </source>
</reference>
<reference key="3">
    <citation type="journal article" date="2009" name="J. Cell Sci.">
        <title>Plk1 and Aurora A regulate the depolymerase activity and the cellular localization of Kif2a.</title>
        <authorList>
            <person name="Jang C.Y."/>
            <person name="Coppinger J.A."/>
            <person name="Seki A."/>
            <person name="Yates J.R. III"/>
            <person name="Fang G."/>
        </authorList>
    </citation>
    <scope>FUNCTION</scope>
    <scope>INTERACTION WITH PLK1 AND AURKA</scope>
    <scope>PHOSPHORYLATION</scope>
    <scope>SUBCELLULAR LOCATION</scope>
</reference>
<feature type="chain" id="PRO_0000125416" description="Kinesin-like protein KIF2A">
    <location>
        <begin position="1"/>
        <end position="682"/>
    </location>
</feature>
<feature type="domain" description="Kinesin motor" evidence="3">
    <location>
        <begin position="198"/>
        <end position="528"/>
    </location>
</feature>
<feature type="region of interest" description="Globular" evidence="2">
    <location>
        <begin position="1"/>
        <end position="192"/>
    </location>
</feature>
<feature type="region of interest" description="Disordered" evidence="4">
    <location>
        <begin position="39"/>
        <end position="129"/>
    </location>
</feature>
<feature type="coiled-coil region" evidence="2">
    <location>
        <begin position="638"/>
        <end position="673"/>
    </location>
</feature>
<feature type="compositionally biased region" description="Polar residues" evidence="4">
    <location>
        <begin position="99"/>
        <end position="115"/>
    </location>
</feature>
<feature type="binding site" evidence="3">
    <location>
        <begin position="288"/>
        <end position="295"/>
    </location>
    <ligand>
        <name>ATP</name>
        <dbReference type="ChEBI" id="CHEBI:30616"/>
    </ligand>
</feature>
<name>KIF2A_XENLA</name>
<dbReference type="EMBL" id="U36486">
    <property type="protein sequence ID" value="AAC59744.2"/>
    <property type="status" value="ALT_INIT"/>
    <property type="molecule type" value="mRNA"/>
</dbReference>
<dbReference type="RefSeq" id="NP_001079931.1">
    <property type="nucleotide sequence ID" value="NM_001086462.1"/>
</dbReference>
<dbReference type="SMR" id="Q91637"/>
<dbReference type="iPTMnet" id="Q91637"/>
<dbReference type="DNASU" id="379622"/>
<dbReference type="GeneID" id="379622"/>
<dbReference type="KEGG" id="xla:379622"/>
<dbReference type="AGR" id="Xenbase:XB-GENE-951759"/>
<dbReference type="CTD" id="379622"/>
<dbReference type="Xenbase" id="XB-GENE-951759">
    <property type="gene designation" value="kif2a.L"/>
</dbReference>
<dbReference type="OrthoDB" id="3176171at2759"/>
<dbReference type="Proteomes" id="UP000186698">
    <property type="component" value="Chromosome 1L"/>
</dbReference>
<dbReference type="Bgee" id="379622">
    <property type="expression patterns" value="Expressed in blastula and 19 other cell types or tissues"/>
</dbReference>
<dbReference type="GO" id="GO:0005813">
    <property type="term" value="C:centrosome"/>
    <property type="evidence" value="ECO:0007669"/>
    <property type="project" value="UniProtKB-SubCell"/>
</dbReference>
<dbReference type="GO" id="GO:0005737">
    <property type="term" value="C:cytoplasm"/>
    <property type="evidence" value="ECO:0007669"/>
    <property type="project" value="UniProtKB-SubCell"/>
</dbReference>
<dbReference type="GO" id="GO:0005874">
    <property type="term" value="C:microtubule"/>
    <property type="evidence" value="ECO:0000318"/>
    <property type="project" value="GO_Central"/>
</dbReference>
<dbReference type="GO" id="GO:0000922">
    <property type="term" value="C:spindle pole"/>
    <property type="evidence" value="ECO:0007669"/>
    <property type="project" value="UniProtKB-SubCell"/>
</dbReference>
<dbReference type="GO" id="GO:0005524">
    <property type="term" value="F:ATP binding"/>
    <property type="evidence" value="ECO:0007669"/>
    <property type="project" value="UniProtKB-KW"/>
</dbReference>
<dbReference type="GO" id="GO:0008017">
    <property type="term" value="F:microtubule binding"/>
    <property type="evidence" value="ECO:0007669"/>
    <property type="project" value="InterPro"/>
</dbReference>
<dbReference type="GO" id="GO:0003777">
    <property type="term" value="F:microtubule motor activity"/>
    <property type="evidence" value="ECO:0000318"/>
    <property type="project" value="GO_Central"/>
</dbReference>
<dbReference type="GO" id="GO:0051301">
    <property type="term" value="P:cell division"/>
    <property type="evidence" value="ECO:0007669"/>
    <property type="project" value="UniProtKB-KW"/>
</dbReference>
<dbReference type="GO" id="GO:0007019">
    <property type="term" value="P:microtubule depolymerization"/>
    <property type="evidence" value="ECO:0000318"/>
    <property type="project" value="GO_Central"/>
</dbReference>
<dbReference type="GO" id="GO:0007018">
    <property type="term" value="P:microtubule-based movement"/>
    <property type="evidence" value="ECO:0007669"/>
    <property type="project" value="InterPro"/>
</dbReference>
<dbReference type="GO" id="GO:0007052">
    <property type="term" value="P:mitotic spindle organization"/>
    <property type="evidence" value="ECO:0000250"/>
    <property type="project" value="UniProtKB"/>
</dbReference>
<dbReference type="CDD" id="cd01367">
    <property type="entry name" value="KISc_KIF2_like"/>
    <property type="match status" value="1"/>
</dbReference>
<dbReference type="FunFam" id="3.40.850.10:FF:000006">
    <property type="entry name" value="Kinesin-like protein"/>
    <property type="match status" value="1"/>
</dbReference>
<dbReference type="Gene3D" id="3.40.850.10">
    <property type="entry name" value="Kinesin motor domain"/>
    <property type="match status" value="1"/>
</dbReference>
<dbReference type="InterPro" id="IPR054473">
    <property type="entry name" value="KIF2A-like_N"/>
</dbReference>
<dbReference type="InterPro" id="IPR027640">
    <property type="entry name" value="Kinesin-like_fam"/>
</dbReference>
<dbReference type="InterPro" id="IPR019821">
    <property type="entry name" value="Kinesin_motor_CS"/>
</dbReference>
<dbReference type="InterPro" id="IPR001752">
    <property type="entry name" value="Kinesin_motor_dom"/>
</dbReference>
<dbReference type="InterPro" id="IPR036961">
    <property type="entry name" value="Kinesin_motor_dom_sf"/>
</dbReference>
<dbReference type="InterPro" id="IPR027417">
    <property type="entry name" value="P-loop_NTPase"/>
</dbReference>
<dbReference type="PANTHER" id="PTHR47971:SF24">
    <property type="entry name" value="KINESIN-LIKE PROTEIN"/>
    <property type="match status" value="1"/>
</dbReference>
<dbReference type="PANTHER" id="PTHR47971">
    <property type="entry name" value="KINESIN-RELATED PROTEIN 6"/>
    <property type="match status" value="1"/>
</dbReference>
<dbReference type="Pfam" id="PF22923">
    <property type="entry name" value="KIF2A-like_1st"/>
    <property type="match status" value="1"/>
</dbReference>
<dbReference type="Pfam" id="PF00225">
    <property type="entry name" value="Kinesin"/>
    <property type="match status" value="1"/>
</dbReference>
<dbReference type="PRINTS" id="PR00380">
    <property type="entry name" value="KINESINHEAVY"/>
</dbReference>
<dbReference type="SMART" id="SM00129">
    <property type="entry name" value="KISc"/>
    <property type="match status" value="1"/>
</dbReference>
<dbReference type="SUPFAM" id="SSF52540">
    <property type="entry name" value="P-loop containing nucleoside triphosphate hydrolases"/>
    <property type="match status" value="1"/>
</dbReference>
<dbReference type="PROSITE" id="PS00411">
    <property type="entry name" value="KINESIN_MOTOR_1"/>
    <property type="match status" value="1"/>
</dbReference>
<dbReference type="PROSITE" id="PS50067">
    <property type="entry name" value="KINESIN_MOTOR_2"/>
    <property type="match status" value="1"/>
</dbReference>
<proteinExistence type="evidence at protein level"/>
<gene>
    <name type="primary">kif2a</name>
    <name type="synonym">kif2</name>
</gene>
<keyword id="KW-0067">ATP-binding</keyword>
<keyword id="KW-0131">Cell cycle</keyword>
<keyword id="KW-0132">Cell division</keyword>
<keyword id="KW-0175">Coiled coil</keyword>
<keyword id="KW-0963">Cytoplasm</keyword>
<keyword id="KW-0206">Cytoskeleton</keyword>
<keyword id="KW-0493">Microtubule</keyword>
<keyword id="KW-0498">Mitosis</keyword>
<keyword id="KW-0505">Motor protein</keyword>
<keyword id="KW-0547">Nucleotide-binding</keyword>
<keyword id="KW-1185">Reference proteome</keyword>
<protein>
    <recommendedName>
        <fullName>Kinesin-like protein KIF2A</fullName>
    </recommendedName>
    <alternativeName>
        <fullName>Kinesin-related protein xKIF2</fullName>
    </alternativeName>
</protein>
<sequence>MVTSLNEDSESITVEWIENGDTKGKEIDLESIFSLNHDLAPDEEIDPGPEMPPPPAPTTKVNKIVKNRRTVAPVKNETPAKDNRVAAVGSARARPIQPIEQSASRQQNGSVSDISPDQPGKKDFGLASRRKSNCVKEVEKLQEKRERRRLQQQELREKKAQDFDATNPNYEIMCMIKDFRGSLDYRPLTTSDPIDEHRICVCVRKRPLNKKETTIKDLDVITIPIKDVVMVHEPKQKVDLTRFLENQTFRFDYAFDETAPNETVYRFTARPLVETIFERGMATCFAYGQTGSGKTHTMGGDFSGKNQDCSKGIYALAARDVFQMLKKPNYKKLELQVYATFFEIYSGKVFDLLNRKTKLRVLEDGKQQVQVVGLQEREVKCVEDVLKLIEIGNSCRTSGQTSANAHSSRSHAVFQIILRKKGKMHGKFSLIDLAGNERGADTSSADRQTRLEGAEINKSLLALKECIRALGRNKPHTPFRASKLTQVLRDSFIGENSRTCMIATISPGMASCENTLNTLRYANRVKELDPSRCRRPPPHDTSCPQTSWMTWKQCGEWGVAPQRDDLKLLCEQNEEEVSPQLFTFHEAVSQMVEMEEQVVEDHRAVFPGTSIRWLEGLKKCLLEMTEEVDYDADSYATQLEAILEKKIDILTELRDKVKSFRAALQEEEHASKQINPKRPRAL</sequence>